<comment type="caution">
    <text evidence="2">It is uncertain whether Met-1 or Met-2 is the initiator.</text>
</comment>
<comment type="sequence caution" evidence="2">
    <conflict type="erroneous initiation">
        <sequence resource="EMBL-CDS" id="AAB68022"/>
    </conflict>
</comment>
<evidence type="ECO:0000256" key="1">
    <source>
        <dbReference type="SAM" id="MobiDB-lite"/>
    </source>
</evidence>
<evidence type="ECO:0000305" key="2"/>
<evidence type="ECO:0007829" key="3">
    <source>
        <dbReference type="PDB" id="4M8B"/>
    </source>
</evidence>
<dbReference type="EMBL" id="U00027">
    <property type="protein sequence ID" value="AAB68022.1"/>
    <property type="status" value="ALT_INIT"/>
    <property type="molecule type" value="Genomic_DNA"/>
</dbReference>
<dbReference type="EMBL" id="BK006934">
    <property type="protein sequence ID" value="DAA06870.1"/>
    <property type="molecule type" value="Genomic_DNA"/>
</dbReference>
<dbReference type="PIR" id="S48916">
    <property type="entry name" value="S48916"/>
</dbReference>
<dbReference type="PDB" id="4M8B">
    <property type="method" value="X-ray"/>
    <property type="resolution" value="2.61 A"/>
    <property type="chains" value="R=6-201"/>
</dbReference>
<dbReference type="PDBsum" id="4M8B"/>
<dbReference type="SMR" id="P38867"/>
<dbReference type="BioGRID" id="36610">
    <property type="interactions" value="371"/>
</dbReference>
<dbReference type="DIP" id="DIP-2754N"/>
<dbReference type="FunCoup" id="P38867">
    <property type="interactions" value="1"/>
</dbReference>
<dbReference type="IntAct" id="P38867">
    <property type="interactions" value="2"/>
</dbReference>
<dbReference type="MINT" id="P38867"/>
<dbReference type="STRING" id="4932.YHR177W"/>
<dbReference type="iPTMnet" id="P38867"/>
<dbReference type="PaxDb" id="4932-YHR177W"/>
<dbReference type="PeptideAtlas" id="P38867"/>
<dbReference type="EnsemblFungi" id="YHR177W_mRNA">
    <property type="protein sequence ID" value="YHR177W"/>
    <property type="gene ID" value="YHR177W"/>
</dbReference>
<dbReference type="KEGG" id="sce:YHR177W"/>
<dbReference type="AGR" id="SGD:S000001220"/>
<dbReference type="SGD" id="S000001220">
    <property type="gene designation" value="YHR177W"/>
</dbReference>
<dbReference type="VEuPathDB" id="FungiDB:YHR177W"/>
<dbReference type="eggNOG" id="KOG4476">
    <property type="taxonomic scope" value="Eukaryota"/>
</dbReference>
<dbReference type="GeneTree" id="ENSGT00940000176779"/>
<dbReference type="HOGENOM" id="CLU_605819_0_0_1"/>
<dbReference type="InParanoid" id="P38867"/>
<dbReference type="OMA" id="NNAPREM"/>
<dbReference type="OrthoDB" id="5572844at2759"/>
<dbReference type="BioCyc" id="YEAST:G3O-31210-MONOMER"/>
<dbReference type="BioGRID-ORCS" id="856582">
    <property type="hits" value="0 hits in 10 CRISPR screens"/>
</dbReference>
<dbReference type="EvolutionaryTrace" id="P38867"/>
<dbReference type="PRO" id="PR:P38867"/>
<dbReference type="Proteomes" id="UP000002311">
    <property type="component" value="Chromosome VIII"/>
</dbReference>
<dbReference type="RNAct" id="P38867">
    <property type="molecule type" value="protein"/>
</dbReference>
<dbReference type="GO" id="GO:0005634">
    <property type="term" value="C:nucleus"/>
    <property type="evidence" value="ECO:0000305"/>
    <property type="project" value="SGD"/>
</dbReference>
<dbReference type="GO" id="GO:0003677">
    <property type="term" value="F:DNA binding"/>
    <property type="evidence" value="ECO:0000314"/>
    <property type="project" value="SGD"/>
</dbReference>
<dbReference type="GO" id="GO:0045944">
    <property type="term" value="P:positive regulation of transcription by RNA polymerase II"/>
    <property type="evidence" value="ECO:0000250"/>
    <property type="project" value="SGD"/>
</dbReference>
<dbReference type="InterPro" id="IPR018608">
    <property type="entry name" value="Gti1/Pac2"/>
</dbReference>
<dbReference type="PANTHER" id="PTHR28027">
    <property type="entry name" value="TRANSCRIPTIONAL REGULATOR MIT1"/>
    <property type="match status" value="1"/>
</dbReference>
<dbReference type="PANTHER" id="PTHR28027:SF2">
    <property type="entry name" value="TRANSCRIPTIONAL REGULATOR MIT1"/>
    <property type="match status" value="1"/>
</dbReference>
<dbReference type="Pfam" id="PF09729">
    <property type="entry name" value="Gti1_Pac2"/>
    <property type="match status" value="1"/>
</dbReference>
<feature type="chain" id="PRO_0000202932" description="Uncharacterized protein YHR177W">
    <location>
        <begin position="1"/>
        <end position="453"/>
    </location>
</feature>
<feature type="region of interest" description="Disordered" evidence="1">
    <location>
        <begin position="183"/>
        <end position="210"/>
    </location>
</feature>
<feature type="region of interest" description="Disordered" evidence="1">
    <location>
        <begin position="428"/>
        <end position="453"/>
    </location>
</feature>
<feature type="compositionally biased region" description="Basic residues" evidence="1">
    <location>
        <begin position="198"/>
        <end position="207"/>
    </location>
</feature>
<feature type="compositionally biased region" description="Polar residues" evidence="1">
    <location>
        <begin position="433"/>
        <end position="453"/>
    </location>
</feature>
<feature type="strand" evidence="3">
    <location>
        <begin position="7"/>
        <end position="10"/>
    </location>
</feature>
<feature type="helix" evidence="3">
    <location>
        <begin position="15"/>
        <end position="26"/>
    </location>
</feature>
<feature type="helix" evidence="3">
    <location>
        <begin position="39"/>
        <end position="45"/>
    </location>
</feature>
<feature type="strand" evidence="3">
    <location>
        <begin position="50"/>
        <end position="55"/>
    </location>
</feature>
<feature type="helix" evidence="3">
    <location>
        <begin position="56"/>
        <end position="59"/>
    </location>
</feature>
<feature type="strand" evidence="3">
    <location>
        <begin position="74"/>
        <end position="76"/>
    </location>
</feature>
<feature type="strand" evidence="3">
    <location>
        <begin position="79"/>
        <end position="87"/>
    </location>
</feature>
<feature type="strand" evidence="3">
    <location>
        <begin position="108"/>
        <end position="110"/>
    </location>
</feature>
<feature type="strand" evidence="3">
    <location>
        <begin position="112"/>
        <end position="127"/>
    </location>
</feature>
<feature type="strand" evidence="3">
    <location>
        <begin position="136"/>
        <end position="146"/>
    </location>
</feature>
<feature type="helix" evidence="3">
    <location>
        <begin position="147"/>
        <end position="152"/>
    </location>
</feature>
<feature type="helix" evidence="3">
    <location>
        <begin position="158"/>
        <end position="160"/>
    </location>
</feature>
<feature type="helix" evidence="3">
    <location>
        <begin position="162"/>
        <end position="167"/>
    </location>
</feature>
<feature type="helix" evidence="3">
    <location>
        <begin position="171"/>
        <end position="178"/>
    </location>
</feature>
<name>YHX7_YEAST</name>
<reference key="1">
    <citation type="journal article" date="1994" name="Science">
        <title>Complete nucleotide sequence of Saccharomyces cerevisiae chromosome VIII.</title>
        <authorList>
            <person name="Johnston M."/>
            <person name="Andrews S."/>
            <person name="Brinkman R."/>
            <person name="Cooper J."/>
            <person name="Ding H."/>
            <person name="Dover J."/>
            <person name="Du Z."/>
            <person name="Favello A."/>
            <person name="Fulton L."/>
            <person name="Gattung S."/>
            <person name="Geisel C."/>
            <person name="Kirsten J."/>
            <person name="Kucaba T."/>
            <person name="Hillier L.W."/>
            <person name="Jier M."/>
            <person name="Johnston L."/>
            <person name="Langston Y."/>
            <person name="Latreille P."/>
            <person name="Louis E.J."/>
            <person name="Macri C."/>
            <person name="Mardis E."/>
            <person name="Menezes S."/>
            <person name="Mouser L."/>
            <person name="Nhan M."/>
            <person name="Rifkin L."/>
            <person name="Riles L."/>
            <person name="St Peter H."/>
            <person name="Trevaskis E."/>
            <person name="Vaughan K."/>
            <person name="Vignati D."/>
            <person name="Wilcox L."/>
            <person name="Wohldman P."/>
            <person name="Waterston R."/>
            <person name="Wilson R."/>
            <person name="Vaudin M."/>
        </authorList>
    </citation>
    <scope>NUCLEOTIDE SEQUENCE [LARGE SCALE GENOMIC DNA]</scope>
    <source>
        <strain>ATCC 204508 / S288c</strain>
    </source>
</reference>
<reference key="2">
    <citation type="journal article" date="2014" name="G3 (Bethesda)">
        <title>The reference genome sequence of Saccharomyces cerevisiae: Then and now.</title>
        <authorList>
            <person name="Engel S.R."/>
            <person name="Dietrich F.S."/>
            <person name="Fisk D.G."/>
            <person name="Binkley G."/>
            <person name="Balakrishnan R."/>
            <person name="Costanzo M.C."/>
            <person name="Dwight S.S."/>
            <person name="Hitz B.C."/>
            <person name="Karra K."/>
            <person name="Nash R.S."/>
            <person name="Weng S."/>
            <person name="Wong E.D."/>
            <person name="Lloyd P."/>
            <person name="Skrzypek M.S."/>
            <person name="Miyasato S.R."/>
            <person name="Simison M."/>
            <person name="Cherry J.M."/>
        </authorList>
    </citation>
    <scope>GENOME REANNOTATION</scope>
    <source>
        <strain>ATCC 204508 / S288c</strain>
    </source>
</reference>
<reference key="3">
    <citation type="journal article" date="2009" name="Science">
        <title>Global analysis of Cdk1 substrate phosphorylation sites provides insights into evolution.</title>
        <authorList>
            <person name="Holt L.J."/>
            <person name="Tuch B.B."/>
            <person name="Villen J."/>
            <person name="Johnson A.D."/>
            <person name="Gygi S.P."/>
            <person name="Morgan D.O."/>
        </authorList>
    </citation>
    <scope>IDENTIFICATION BY MASS SPECTROMETRY [LARGE SCALE ANALYSIS]</scope>
</reference>
<sequence>MMDISPTCYGYIDDEQDLALVFQGVFNGNLRCIERRPYDAEKVELVNPGNIFVFNEEKSGIKRWTDGFSWSPSRISGKFLVYREYNRLGSTHDLPLHNVPEYNIFERAHRKYFYTGLLKKTFSLKFNMDPTDSTKLETFHLIAYYTEKDIHQGSLRRPSENPFFHKFRPSQKLLDALQKVAVGNGRSNPSKNNERGRTKAHNYKTRRSLSSSPSYCDLLSNYNNHPGNIPVRTAVQLPLTTFNNAPREMHQQQHRQQQQYLLPIDEQNKLPLPYMQHQPQPIGVYNPNYQPGLRRTVSQPMIFCNTYNTLPQQPTAAPYERRGVSPSVIYSSNTLSPIPYQNIDPYSSRSGPECNHSKAPIAPTMMPPVHHILVHDYRQPKPVTDSINPPNVNITTSTTNKNLDGIYILPAPRMNPPAQTQYQMIHAPDSMQHPPTFSKNNTSSNPKSHQYSK</sequence>
<accession>P38867</accession>
<accession>D3DLC6</accession>
<protein>
    <recommendedName>
        <fullName>Uncharacterized protein YHR177W</fullName>
    </recommendedName>
</protein>
<organism>
    <name type="scientific">Saccharomyces cerevisiae (strain ATCC 204508 / S288c)</name>
    <name type="common">Baker's yeast</name>
    <dbReference type="NCBI Taxonomy" id="559292"/>
    <lineage>
        <taxon>Eukaryota</taxon>
        <taxon>Fungi</taxon>
        <taxon>Dikarya</taxon>
        <taxon>Ascomycota</taxon>
        <taxon>Saccharomycotina</taxon>
        <taxon>Saccharomycetes</taxon>
        <taxon>Saccharomycetales</taxon>
        <taxon>Saccharomycetaceae</taxon>
        <taxon>Saccharomyces</taxon>
    </lineage>
</organism>
<proteinExistence type="evidence at protein level"/>
<keyword id="KW-0002">3D-structure</keyword>
<keyword id="KW-1185">Reference proteome</keyword>
<gene>
    <name type="ordered locus">YHR177W</name>
</gene>